<evidence type="ECO:0000255" key="1">
    <source>
        <dbReference type="HAMAP-Rule" id="MF_00270"/>
    </source>
</evidence>
<evidence type="ECO:0000305" key="2"/>
<gene>
    <name evidence="1" type="primary">rpsR</name>
    <name type="ordered locus">Spy49_1426c</name>
</gene>
<dbReference type="EMBL" id="CP000829">
    <property type="protein sequence ID" value="ACI61700.1"/>
    <property type="molecule type" value="Genomic_DNA"/>
</dbReference>
<dbReference type="SMR" id="B5XI38"/>
<dbReference type="KEGG" id="soz:Spy49_1426c"/>
<dbReference type="HOGENOM" id="CLU_148710_2_2_9"/>
<dbReference type="Proteomes" id="UP000001039">
    <property type="component" value="Chromosome"/>
</dbReference>
<dbReference type="GO" id="GO:0022627">
    <property type="term" value="C:cytosolic small ribosomal subunit"/>
    <property type="evidence" value="ECO:0007669"/>
    <property type="project" value="TreeGrafter"/>
</dbReference>
<dbReference type="GO" id="GO:0070181">
    <property type="term" value="F:small ribosomal subunit rRNA binding"/>
    <property type="evidence" value="ECO:0007669"/>
    <property type="project" value="TreeGrafter"/>
</dbReference>
<dbReference type="GO" id="GO:0003735">
    <property type="term" value="F:structural constituent of ribosome"/>
    <property type="evidence" value="ECO:0007669"/>
    <property type="project" value="InterPro"/>
</dbReference>
<dbReference type="GO" id="GO:0006412">
    <property type="term" value="P:translation"/>
    <property type="evidence" value="ECO:0007669"/>
    <property type="project" value="UniProtKB-UniRule"/>
</dbReference>
<dbReference type="FunFam" id="4.10.640.10:FF:000003">
    <property type="entry name" value="30S ribosomal protein S18"/>
    <property type="match status" value="1"/>
</dbReference>
<dbReference type="Gene3D" id="4.10.640.10">
    <property type="entry name" value="Ribosomal protein S18"/>
    <property type="match status" value="1"/>
</dbReference>
<dbReference type="HAMAP" id="MF_00270">
    <property type="entry name" value="Ribosomal_bS18"/>
    <property type="match status" value="1"/>
</dbReference>
<dbReference type="InterPro" id="IPR001648">
    <property type="entry name" value="Ribosomal_bS18"/>
</dbReference>
<dbReference type="InterPro" id="IPR018275">
    <property type="entry name" value="Ribosomal_bS18_CS"/>
</dbReference>
<dbReference type="InterPro" id="IPR036870">
    <property type="entry name" value="Ribosomal_bS18_sf"/>
</dbReference>
<dbReference type="NCBIfam" id="TIGR00165">
    <property type="entry name" value="S18"/>
    <property type="match status" value="1"/>
</dbReference>
<dbReference type="PANTHER" id="PTHR13479">
    <property type="entry name" value="30S RIBOSOMAL PROTEIN S18"/>
    <property type="match status" value="1"/>
</dbReference>
<dbReference type="PANTHER" id="PTHR13479:SF40">
    <property type="entry name" value="SMALL RIBOSOMAL SUBUNIT PROTEIN BS18M"/>
    <property type="match status" value="1"/>
</dbReference>
<dbReference type="Pfam" id="PF01084">
    <property type="entry name" value="Ribosomal_S18"/>
    <property type="match status" value="1"/>
</dbReference>
<dbReference type="PRINTS" id="PR00974">
    <property type="entry name" value="RIBOSOMALS18"/>
</dbReference>
<dbReference type="SUPFAM" id="SSF46911">
    <property type="entry name" value="Ribosomal protein S18"/>
    <property type="match status" value="1"/>
</dbReference>
<dbReference type="PROSITE" id="PS00057">
    <property type="entry name" value="RIBOSOMAL_S18"/>
    <property type="match status" value="1"/>
</dbReference>
<feature type="chain" id="PRO_1000114459" description="Small ribosomal subunit protein bS18">
    <location>
        <begin position="1"/>
        <end position="79"/>
    </location>
</feature>
<accession>B5XI38</accession>
<sequence length="79" mass="9200">MAQQRRGGFKRRKKVDFIAANKIEYVDYKDTELLSRFVSERGKILPRRVPGTSAKNQRKVTTAIKRARVMALMPYVNED</sequence>
<proteinExistence type="inferred from homology"/>
<protein>
    <recommendedName>
        <fullName evidence="1">Small ribosomal subunit protein bS18</fullName>
    </recommendedName>
    <alternativeName>
        <fullName evidence="2">30S ribosomal protein S18</fullName>
    </alternativeName>
</protein>
<keyword id="KW-0687">Ribonucleoprotein</keyword>
<keyword id="KW-0689">Ribosomal protein</keyword>
<keyword id="KW-0694">RNA-binding</keyword>
<keyword id="KW-0699">rRNA-binding</keyword>
<name>RS18_STRPZ</name>
<comment type="function">
    <text evidence="1">Binds as a heterodimer with protein bS6 to the central domain of the 16S rRNA, where it helps stabilize the platform of the 30S subunit.</text>
</comment>
<comment type="subunit">
    <text evidence="1">Part of the 30S ribosomal subunit. Forms a tight heterodimer with protein bS6.</text>
</comment>
<comment type="similarity">
    <text evidence="1">Belongs to the bacterial ribosomal protein bS18 family.</text>
</comment>
<organism>
    <name type="scientific">Streptococcus pyogenes serotype M49 (strain NZ131)</name>
    <dbReference type="NCBI Taxonomy" id="471876"/>
    <lineage>
        <taxon>Bacteria</taxon>
        <taxon>Bacillati</taxon>
        <taxon>Bacillota</taxon>
        <taxon>Bacilli</taxon>
        <taxon>Lactobacillales</taxon>
        <taxon>Streptococcaceae</taxon>
        <taxon>Streptococcus</taxon>
    </lineage>
</organism>
<reference key="1">
    <citation type="journal article" date="2008" name="J. Bacteriol.">
        <title>Genome sequence of a nephritogenic and highly transformable M49 strain of Streptococcus pyogenes.</title>
        <authorList>
            <person name="McShan W.M."/>
            <person name="Ferretti J.J."/>
            <person name="Karasawa T."/>
            <person name="Suvorov A.N."/>
            <person name="Lin S."/>
            <person name="Qin B."/>
            <person name="Jia H."/>
            <person name="Kenton S."/>
            <person name="Najar F."/>
            <person name="Wu H."/>
            <person name="Scott J."/>
            <person name="Roe B.A."/>
            <person name="Savic D.J."/>
        </authorList>
    </citation>
    <scope>NUCLEOTIDE SEQUENCE [LARGE SCALE GENOMIC DNA]</scope>
    <source>
        <strain>NZ131</strain>
    </source>
</reference>